<name>HS701_ARATH</name>
<comment type="function">
    <text evidence="4 8 9 12 24">In cooperation with other chaperones, Hsp70s are key components that facilitate folding of de novo synthesized proteins, assist translocation of precursor proteins into organelles, and are responsible for degradation of damaged protein under stress conditions (Probable). Probably involved in defense response. Chaperone involved in protein targeting to chloroplasts. May cooperate with SGT1 and HSP90 in R gene-mediated resistance towards the oomycete Hyaloperonospora parasitica (downy mildew). Plays a role with WPP-domain proteins in facilitating WIT1 nuclear envelope targeting (PubMed:12805626, PubMed:18065690, PubMed:19617588). Modulates stomatal aperture in response to various environmental conditions and physiological responses to the hormone abscisic acid (ABA) (PubMed:21586649).</text>
</comment>
<comment type="subunit">
    <text evidence="3 6 7 8 9 10 13 18">Binds to the deubiquitinating enzyme AMSH3. Interacts with SGT1B (via SGS domain). Interacts with OEP61. Interacts with HSFA1A/HSF1. Interacts with BAG3, BAG4 and BAG5. Interacts with WPP1, WPP2 and WIT1. Component of a ternary complex composed of WPP1, HSP70-1 and WIT1. Binds to TIR.</text>
</comment>
<comment type="interaction">
    <interactant intactId="EBI-1238845">
        <id>P22953</id>
    </interactant>
    <interactant intactId="EBI-1581364">
        <id>Q9SUT5</id>
        <label>SGT1B</label>
    </interactant>
    <organismsDiffer>false</organismsDiffer>
    <experiments>3</experiments>
</comment>
<comment type="subcellular location">
    <subcellularLocation>
        <location evidence="15">Cytoplasm</location>
        <location evidence="15">Cytosol</location>
    </subcellularLocation>
    <subcellularLocation>
        <location evidence="15">Nucleus</location>
    </subcellularLocation>
</comment>
<comment type="alternative products">
    <event type="alternative splicing"/>
    <isoform>
        <id>P22953-1</id>
        <name>1</name>
        <sequence type="displayed"/>
    </isoform>
    <text>A number of isoforms are produced. According to EST sequences.</text>
</comment>
<comment type="tissue specificity">
    <text evidence="15 16">Expressed at a substantial level during normal growth in root, stem, leaf and flower tissues, but not in siliques (PubMed:8049382). Expressed in cotyledons, leaves, stems, vascular bundles, roots, stigmas and anthers (PubMed:28004282).</text>
</comment>
<comment type="developmental stage">
    <text evidence="2">Down-regulated during seed maturation. Up-regulated during germination.</text>
</comment>
<comment type="induction">
    <text evidence="2 5 17">Induced by heat shock and cold (PubMed:11402207). Induced by dehydration stress and abscisic acid (ABA) (PubMed:8075396). Up-regulated by viral infection (PubMed:15805473).</text>
</comment>
<comment type="disruption phenotype">
    <text evidence="11 14 15">No visible phenotype under normal growth conditions (PubMed:21418353, PubMed:26408532, PubMed:28004282). The double mutants hsp70-1 and hsp70-4 exhibit accelerated bolting, flowering, and branching, small round shape and flat leaf blades, thin stems and short siliques (PubMed:28004282). The double mutants hsp70-1 and hsp70-4 exhibit reduced tolerance to abiotic stresses, such as heat, cold, salt and osmotic shock (PubMed:28004282).</text>
</comment>
<comment type="miscellaneous">
    <text evidence="4 12">Plants overexpressing HSP70-1 show disabled immune responses, enhanced tolerance to heat shock and altered plant growth and development (PubMed:12805626). Plants overexpressing HSP70-1 are hypersensitive to abscisic acid (ABA) in seed germination assays, and are compromised in the dark- and ABA-induced stomatal closure (PubMed:21586649).</text>
</comment>
<comment type="similarity">
    <text evidence="23">Belongs to the heat shock protein 70 (TC 1.A.33) family. DnaK subfamily.</text>
</comment>
<feature type="initiator methionine" description="Removed" evidence="27">
    <location>
        <position position="1"/>
    </location>
</feature>
<feature type="chain" id="PRO_0000078344" description="Heat shock 70 kDa protein 1">
    <location>
        <begin position="2"/>
        <end position="651"/>
    </location>
</feature>
<feature type="region of interest" description="Disordered" evidence="1">
    <location>
        <begin position="618"/>
        <end position="651"/>
    </location>
</feature>
<feature type="compositionally biased region" description="Gly residues" evidence="1">
    <location>
        <begin position="619"/>
        <end position="629"/>
    </location>
</feature>
<feature type="modified residue" description="N-acetylserine" evidence="27">
    <location>
        <position position="2"/>
    </location>
</feature>
<feature type="sequence conflict" description="In Ref. 6; CAA54419." evidence="23" ref="6">
    <original>N</original>
    <variation>S</variation>
    <location>
        <position position="65"/>
    </location>
</feature>
<feature type="sequence conflict" description="In Ref. 6; CAA54419." evidence="23" ref="6">
    <original>S</original>
    <variation>R</variation>
    <location>
        <position position="195"/>
    </location>
</feature>
<feature type="sequence conflict" description="In Ref. 2; CAA52684." evidence="23" ref="2">
    <original>S</original>
    <variation>T</variation>
    <location>
        <position position="195"/>
    </location>
</feature>
<feature type="sequence conflict" description="In Ref. 6; CAA54419." evidence="23" ref="6">
    <original>D</original>
    <variation>V</variation>
    <location>
        <position position="372"/>
    </location>
</feature>
<feature type="sequence conflict" description="In Ref. 6; CAA54419." evidence="23" ref="6">
    <original>A</original>
    <variation>V</variation>
    <location>
        <position position="376"/>
    </location>
</feature>
<feature type="sequence conflict" description="In Ref. 6; CAA54419." evidence="23" ref="6">
    <original>I</original>
    <variation>V</variation>
    <location>
        <position position="507"/>
    </location>
</feature>
<dbReference type="EMBL" id="X74604">
    <property type="protein sequence ID" value="CAA52684.1"/>
    <property type="molecule type" value="mRNA"/>
</dbReference>
<dbReference type="EMBL" id="AL162971">
    <property type="protein sequence ID" value="CAB85987.1"/>
    <property type="molecule type" value="Genomic_DNA"/>
</dbReference>
<dbReference type="EMBL" id="CP002688">
    <property type="protein sequence ID" value="AED90480.1"/>
    <property type="molecule type" value="Genomic_DNA"/>
</dbReference>
<dbReference type="EMBL" id="AY035123">
    <property type="protein sequence ID" value="AAK59628.2"/>
    <property type="molecule type" value="mRNA"/>
</dbReference>
<dbReference type="EMBL" id="AY057481">
    <property type="protein sequence ID" value="AAL09715.1"/>
    <property type="molecule type" value="mRNA"/>
</dbReference>
<dbReference type="EMBL" id="AY120747">
    <property type="protein sequence ID" value="AAM53305.1"/>
    <property type="molecule type" value="mRNA"/>
</dbReference>
<dbReference type="EMBL" id="BT002754">
    <property type="protein sequence ID" value="AAO22583.1"/>
    <property type="molecule type" value="mRNA"/>
</dbReference>
<dbReference type="EMBL" id="AH001335">
    <property type="protein sequence ID" value="AAA32819.1"/>
    <property type="molecule type" value="Genomic_DNA"/>
</dbReference>
<dbReference type="EMBL" id="X77199">
    <property type="protein sequence ID" value="CAA54419.1"/>
    <property type="molecule type" value="Genomic_DNA"/>
</dbReference>
<dbReference type="PIR" id="S46302">
    <property type="entry name" value="S46302"/>
</dbReference>
<dbReference type="PIR" id="T48271">
    <property type="entry name" value="T48271"/>
</dbReference>
<dbReference type="RefSeq" id="NP_195870.1">
    <molecule id="P22953-1"/>
    <property type="nucleotide sequence ID" value="NM_120328.5"/>
</dbReference>
<dbReference type="SMR" id="P22953"/>
<dbReference type="BioGRID" id="16298">
    <property type="interactions" value="45"/>
</dbReference>
<dbReference type="FunCoup" id="P22953">
    <property type="interactions" value="2388"/>
</dbReference>
<dbReference type="IntAct" id="P22953">
    <property type="interactions" value="11"/>
</dbReference>
<dbReference type="MINT" id="P22953"/>
<dbReference type="STRING" id="3702.P22953"/>
<dbReference type="TCDB" id="1.A.33.1.1">
    <property type="family name" value="the cation channel-forming heat shock protein-70 (hsp70) family"/>
</dbReference>
<dbReference type="iPTMnet" id="P22953"/>
<dbReference type="MetOSite" id="P22953"/>
<dbReference type="PaxDb" id="3702-AT5G02500.1"/>
<dbReference type="EnsemblPlants" id="AT5G02500.1">
    <molecule id="P22953-1"/>
    <property type="protein sequence ID" value="AT5G02500.1"/>
    <property type="gene ID" value="AT5G02500"/>
</dbReference>
<dbReference type="GeneID" id="831020"/>
<dbReference type="Gramene" id="AT5G02500.1">
    <molecule id="P22953-1"/>
    <property type="protein sequence ID" value="AT5G02500.1"/>
    <property type="gene ID" value="AT5G02500"/>
</dbReference>
<dbReference type="KEGG" id="ath:AT5G02500"/>
<dbReference type="Araport" id="AT5G02500"/>
<dbReference type="TAIR" id="AT5G02500">
    <property type="gene designation" value="HSC70-1"/>
</dbReference>
<dbReference type="eggNOG" id="KOG0101">
    <property type="taxonomic scope" value="Eukaryota"/>
</dbReference>
<dbReference type="HOGENOM" id="CLU_005965_3_0_1"/>
<dbReference type="InParanoid" id="P22953"/>
<dbReference type="OMA" id="SYAYNIK"/>
<dbReference type="OrthoDB" id="1082411at2759"/>
<dbReference type="PhylomeDB" id="P22953"/>
<dbReference type="BRENDA" id="3.6.4.10">
    <property type="organism ID" value="399"/>
</dbReference>
<dbReference type="CD-CODE" id="4299E36E">
    <property type="entry name" value="Nucleolus"/>
</dbReference>
<dbReference type="PRO" id="PR:P22953"/>
<dbReference type="Proteomes" id="UP000006548">
    <property type="component" value="Chromosome 5"/>
</dbReference>
<dbReference type="ExpressionAtlas" id="P22953">
    <property type="expression patterns" value="baseline and differential"/>
</dbReference>
<dbReference type="GO" id="GO:0048046">
    <property type="term" value="C:apoplast"/>
    <property type="evidence" value="ECO:0007005"/>
    <property type="project" value="TAIR"/>
</dbReference>
<dbReference type="GO" id="GO:0009507">
    <property type="term" value="C:chloroplast"/>
    <property type="evidence" value="ECO:0007005"/>
    <property type="project" value="TAIR"/>
</dbReference>
<dbReference type="GO" id="GO:0005737">
    <property type="term" value="C:cytoplasm"/>
    <property type="evidence" value="ECO:0000314"/>
    <property type="project" value="UniProtKB"/>
</dbReference>
<dbReference type="GO" id="GO:0005829">
    <property type="term" value="C:cytosol"/>
    <property type="evidence" value="ECO:0000314"/>
    <property type="project" value="TAIR"/>
</dbReference>
<dbReference type="GO" id="GO:0022626">
    <property type="term" value="C:cytosolic ribosome"/>
    <property type="evidence" value="ECO:0007005"/>
    <property type="project" value="TAIR"/>
</dbReference>
<dbReference type="GO" id="GO:0005794">
    <property type="term" value="C:Golgi apparatus"/>
    <property type="evidence" value="ECO:0007005"/>
    <property type="project" value="TAIR"/>
</dbReference>
<dbReference type="GO" id="GO:0005730">
    <property type="term" value="C:nucleolus"/>
    <property type="evidence" value="ECO:0007005"/>
    <property type="project" value="TAIR"/>
</dbReference>
<dbReference type="GO" id="GO:0005634">
    <property type="term" value="C:nucleus"/>
    <property type="evidence" value="ECO:0000314"/>
    <property type="project" value="TAIR"/>
</dbReference>
<dbReference type="GO" id="GO:0009505">
    <property type="term" value="C:plant-type cell wall"/>
    <property type="evidence" value="ECO:0007005"/>
    <property type="project" value="TAIR"/>
</dbReference>
<dbReference type="GO" id="GO:0000325">
    <property type="term" value="C:plant-type vacuole"/>
    <property type="evidence" value="ECO:0007005"/>
    <property type="project" value="TAIR"/>
</dbReference>
<dbReference type="GO" id="GO:0005886">
    <property type="term" value="C:plasma membrane"/>
    <property type="evidence" value="ECO:0007005"/>
    <property type="project" value="TAIR"/>
</dbReference>
<dbReference type="GO" id="GO:0009506">
    <property type="term" value="C:plasmodesma"/>
    <property type="evidence" value="ECO:0007005"/>
    <property type="project" value="TAIR"/>
</dbReference>
<dbReference type="GO" id="GO:0005524">
    <property type="term" value="F:ATP binding"/>
    <property type="evidence" value="ECO:0007669"/>
    <property type="project" value="UniProtKB-KW"/>
</dbReference>
<dbReference type="GO" id="GO:0140662">
    <property type="term" value="F:ATP-dependent protein folding chaperone"/>
    <property type="evidence" value="ECO:0007669"/>
    <property type="project" value="InterPro"/>
</dbReference>
<dbReference type="GO" id="GO:0003729">
    <property type="term" value="F:mRNA binding"/>
    <property type="evidence" value="ECO:0000314"/>
    <property type="project" value="TAIR"/>
</dbReference>
<dbReference type="GO" id="GO:0002020">
    <property type="term" value="F:protease binding"/>
    <property type="evidence" value="ECO:0000353"/>
    <property type="project" value="UniProtKB"/>
</dbReference>
<dbReference type="GO" id="GO:0042742">
    <property type="term" value="P:defense response to bacterium"/>
    <property type="evidence" value="ECO:0000315"/>
    <property type="project" value="UniProtKB"/>
</dbReference>
<dbReference type="GO" id="GO:0050832">
    <property type="term" value="P:defense response to fungus"/>
    <property type="evidence" value="ECO:0000315"/>
    <property type="project" value="UniProtKB"/>
</dbReference>
<dbReference type="GO" id="GO:0098542">
    <property type="term" value="P:defense response to other organism"/>
    <property type="evidence" value="ECO:0000315"/>
    <property type="project" value="TAIR"/>
</dbReference>
<dbReference type="GO" id="GO:0010286">
    <property type="term" value="P:heat acclimation"/>
    <property type="evidence" value="ECO:0000315"/>
    <property type="project" value="TAIR"/>
</dbReference>
<dbReference type="GO" id="GO:0010187">
    <property type="term" value="P:negative regulation of seed germination"/>
    <property type="evidence" value="ECO:0000315"/>
    <property type="project" value="TAIR"/>
</dbReference>
<dbReference type="GO" id="GO:0009408">
    <property type="term" value="P:response to heat"/>
    <property type="evidence" value="ECO:0000315"/>
    <property type="project" value="UniProtKB"/>
</dbReference>
<dbReference type="GO" id="GO:0009615">
    <property type="term" value="P:response to virus"/>
    <property type="evidence" value="ECO:0000270"/>
    <property type="project" value="TAIR"/>
</dbReference>
<dbReference type="GO" id="GO:0090332">
    <property type="term" value="P:stomatal closure"/>
    <property type="evidence" value="ECO:0000315"/>
    <property type="project" value="TAIR"/>
</dbReference>
<dbReference type="CDD" id="cd10233">
    <property type="entry name" value="ASKHA_NBD_HSP70_HSPA1"/>
    <property type="match status" value="1"/>
</dbReference>
<dbReference type="FunFam" id="2.60.34.10:FF:000002">
    <property type="entry name" value="Heat shock 70 kDa"/>
    <property type="match status" value="1"/>
</dbReference>
<dbReference type="FunFam" id="3.90.640.10:FF:000002">
    <property type="entry name" value="Heat shock 70 kDa"/>
    <property type="match status" value="1"/>
</dbReference>
<dbReference type="FunFam" id="1.20.1270.10:FF:000028">
    <property type="entry name" value="Heat shock 70 kDa protein"/>
    <property type="match status" value="1"/>
</dbReference>
<dbReference type="FunFam" id="3.30.420.40:FF:000172">
    <property type="entry name" value="Heat shock 70 kDa protein"/>
    <property type="match status" value="1"/>
</dbReference>
<dbReference type="FunFam" id="3.30.30.30:FF:000001">
    <property type="entry name" value="heat shock 70 kDa protein-like"/>
    <property type="match status" value="1"/>
</dbReference>
<dbReference type="FunFam" id="3.30.420.40:FF:000465">
    <property type="entry name" value="Heat shock cognate 70 kDa protein 2"/>
    <property type="match status" value="1"/>
</dbReference>
<dbReference type="FunFam" id="3.30.420.40:FF:000026">
    <property type="entry name" value="Heat shock protein 70"/>
    <property type="match status" value="1"/>
</dbReference>
<dbReference type="Gene3D" id="1.20.1270.10">
    <property type="match status" value="1"/>
</dbReference>
<dbReference type="Gene3D" id="3.30.30.30">
    <property type="match status" value="1"/>
</dbReference>
<dbReference type="Gene3D" id="3.30.420.40">
    <property type="match status" value="2"/>
</dbReference>
<dbReference type="Gene3D" id="3.90.640.10">
    <property type="entry name" value="Actin, Chain A, domain 4"/>
    <property type="match status" value="1"/>
</dbReference>
<dbReference type="Gene3D" id="2.60.34.10">
    <property type="entry name" value="Substrate Binding Domain Of DNAk, Chain A, domain 1"/>
    <property type="match status" value="1"/>
</dbReference>
<dbReference type="InterPro" id="IPR043129">
    <property type="entry name" value="ATPase_NBD"/>
</dbReference>
<dbReference type="InterPro" id="IPR018181">
    <property type="entry name" value="Heat_shock_70_CS"/>
</dbReference>
<dbReference type="InterPro" id="IPR029048">
    <property type="entry name" value="HSP70_C_sf"/>
</dbReference>
<dbReference type="InterPro" id="IPR029047">
    <property type="entry name" value="HSP70_peptide-bd_sf"/>
</dbReference>
<dbReference type="InterPro" id="IPR013126">
    <property type="entry name" value="Hsp_70_fam"/>
</dbReference>
<dbReference type="NCBIfam" id="NF001413">
    <property type="entry name" value="PRK00290.1"/>
    <property type="match status" value="1"/>
</dbReference>
<dbReference type="PANTHER" id="PTHR19375">
    <property type="entry name" value="HEAT SHOCK PROTEIN 70KDA"/>
    <property type="match status" value="1"/>
</dbReference>
<dbReference type="Pfam" id="PF00012">
    <property type="entry name" value="HSP70"/>
    <property type="match status" value="1"/>
</dbReference>
<dbReference type="PRINTS" id="PR00301">
    <property type="entry name" value="HEATSHOCK70"/>
</dbReference>
<dbReference type="SUPFAM" id="SSF53067">
    <property type="entry name" value="Actin-like ATPase domain"/>
    <property type="match status" value="2"/>
</dbReference>
<dbReference type="SUPFAM" id="SSF100934">
    <property type="entry name" value="Heat shock protein 70kD (HSP70), C-terminal subdomain"/>
    <property type="match status" value="1"/>
</dbReference>
<dbReference type="SUPFAM" id="SSF100920">
    <property type="entry name" value="Heat shock protein 70kD (HSP70), peptide-binding domain"/>
    <property type="match status" value="1"/>
</dbReference>
<dbReference type="PROSITE" id="PS00297">
    <property type="entry name" value="HSP70_1"/>
    <property type="match status" value="1"/>
</dbReference>
<dbReference type="PROSITE" id="PS00329">
    <property type="entry name" value="HSP70_2"/>
    <property type="match status" value="1"/>
</dbReference>
<dbReference type="PROSITE" id="PS01036">
    <property type="entry name" value="HSP70_3"/>
    <property type="match status" value="1"/>
</dbReference>
<gene>
    <name evidence="20" type="primary">HSP70-1</name>
    <name evidence="22" type="synonym">ERD2</name>
    <name evidence="19" type="synonym">HSC70-1</name>
    <name evidence="21" type="synonym">MED37_4</name>
    <name type="synonym">MED37E</name>
    <name evidence="25" type="ordered locus">At5g02500</name>
    <name evidence="26" type="ORF">T22P11.90</name>
</gene>
<proteinExistence type="evidence at protein level"/>
<evidence type="ECO:0000256" key="1">
    <source>
        <dbReference type="SAM" id="MobiDB-lite"/>
    </source>
</evidence>
<evidence type="ECO:0000269" key="2">
    <source>
    </source>
</evidence>
<evidence type="ECO:0000269" key="3">
    <source>
    </source>
</evidence>
<evidence type="ECO:0000269" key="4">
    <source>
    </source>
</evidence>
<evidence type="ECO:0000269" key="5">
    <source>
    </source>
</evidence>
<evidence type="ECO:0000269" key="6">
    <source>
    </source>
</evidence>
<evidence type="ECO:0000269" key="7">
    <source>
    </source>
</evidence>
<evidence type="ECO:0000269" key="8">
    <source>
    </source>
</evidence>
<evidence type="ECO:0000269" key="9">
    <source>
    </source>
</evidence>
<evidence type="ECO:0000269" key="10">
    <source>
    </source>
</evidence>
<evidence type="ECO:0000269" key="11">
    <source>
    </source>
</evidence>
<evidence type="ECO:0000269" key="12">
    <source>
    </source>
</evidence>
<evidence type="ECO:0000269" key="13">
    <source>
    </source>
</evidence>
<evidence type="ECO:0000269" key="14">
    <source>
    </source>
</evidence>
<evidence type="ECO:0000269" key="15">
    <source>
    </source>
</evidence>
<evidence type="ECO:0000269" key="16">
    <source>
    </source>
</evidence>
<evidence type="ECO:0000269" key="17">
    <source>
    </source>
</evidence>
<evidence type="ECO:0000269" key="18">
    <source ref="8"/>
</evidence>
<evidence type="ECO:0000303" key="19">
    <source>
    </source>
</evidence>
<evidence type="ECO:0000303" key="20">
    <source>
    </source>
</evidence>
<evidence type="ECO:0000303" key="21">
    <source>
    </source>
</evidence>
<evidence type="ECO:0000303" key="22">
    <source>
    </source>
</evidence>
<evidence type="ECO:0000305" key="23"/>
<evidence type="ECO:0000305" key="24">
    <source>
    </source>
</evidence>
<evidence type="ECO:0000312" key="25">
    <source>
        <dbReference type="Araport" id="AT5G02500"/>
    </source>
</evidence>
<evidence type="ECO:0000312" key="26">
    <source>
        <dbReference type="EMBL" id="CAB85987.1"/>
    </source>
</evidence>
<evidence type="ECO:0007744" key="27">
    <source>
    </source>
</evidence>
<keyword id="KW-0007">Acetylation</keyword>
<keyword id="KW-0025">Alternative splicing</keyword>
<keyword id="KW-0067">ATP-binding</keyword>
<keyword id="KW-0143">Chaperone</keyword>
<keyword id="KW-0963">Cytoplasm</keyword>
<keyword id="KW-0547">Nucleotide-binding</keyword>
<keyword id="KW-0539">Nucleus</keyword>
<keyword id="KW-0611">Plant defense</keyword>
<keyword id="KW-1185">Reference proteome</keyword>
<keyword id="KW-0346">Stress response</keyword>
<keyword id="KW-0804">Transcription</keyword>
<keyword id="KW-0805">Transcription regulation</keyword>
<accession>P22953</accession>
<accession>Q93VU6</accession>
<accession>Q9LZ52</accession>
<reference key="1">
    <citation type="journal article" date="1994" name="Plant Mol. Biol.">
        <title>Isolation of a cDNA encoding a 70 kDa heat-shock cognate protein expressed in vegetative tissues of Arabidopsis thaliana.</title>
        <authorList>
            <person name="Wu S.H."/>
            <person name="Wang C."/>
            <person name="Chen J."/>
            <person name="Lin B.-L."/>
        </authorList>
    </citation>
    <scope>NUCLEOTIDE SEQUENCE [MRNA]</scope>
    <scope>TISSUE SPECIFICITY</scope>
    <source>
        <strain>cv. Columbia</strain>
    </source>
</reference>
<reference key="2">
    <citation type="journal article" date="2000" name="Nature">
        <title>Sequence and analysis of chromosome 5 of the plant Arabidopsis thaliana.</title>
        <authorList>
            <person name="Tabata S."/>
            <person name="Kaneko T."/>
            <person name="Nakamura Y."/>
            <person name="Kotani H."/>
            <person name="Kato T."/>
            <person name="Asamizu E."/>
            <person name="Miyajima N."/>
            <person name="Sasamoto S."/>
            <person name="Kimura T."/>
            <person name="Hosouchi T."/>
            <person name="Kawashima K."/>
            <person name="Kohara M."/>
            <person name="Matsumoto M."/>
            <person name="Matsuno A."/>
            <person name="Muraki A."/>
            <person name="Nakayama S."/>
            <person name="Nakazaki N."/>
            <person name="Naruo K."/>
            <person name="Okumura S."/>
            <person name="Shinpo S."/>
            <person name="Takeuchi C."/>
            <person name="Wada T."/>
            <person name="Watanabe A."/>
            <person name="Yamada M."/>
            <person name="Yasuda M."/>
            <person name="Sato S."/>
            <person name="de la Bastide M."/>
            <person name="Huang E."/>
            <person name="Spiegel L."/>
            <person name="Gnoj L."/>
            <person name="O'Shaughnessy A."/>
            <person name="Preston R."/>
            <person name="Habermann K."/>
            <person name="Murray J."/>
            <person name="Johnson D."/>
            <person name="Rohlfing T."/>
            <person name="Nelson J."/>
            <person name="Stoneking T."/>
            <person name="Pepin K."/>
            <person name="Spieth J."/>
            <person name="Sekhon M."/>
            <person name="Armstrong J."/>
            <person name="Becker M."/>
            <person name="Belter E."/>
            <person name="Cordum H."/>
            <person name="Cordes M."/>
            <person name="Courtney L."/>
            <person name="Courtney W."/>
            <person name="Dante M."/>
            <person name="Du H."/>
            <person name="Edwards J."/>
            <person name="Fryman J."/>
            <person name="Haakensen B."/>
            <person name="Lamar E."/>
            <person name="Latreille P."/>
            <person name="Leonard S."/>
            <person name="Meyer R."/>
            <person name="Mulvaney E."/>
            <person name="Ozersky P."/>
            <person name="Riley A."/>
            <person name="Strowmatt C."/>
            <person name="Wagner-McPherson C."/>
            <person name="Wollam A."/>
            <person name="Yoakum M."/>
            <person name="Bell M."/>
            <person name="Dedhia N."/>
            <person name="Parnell L."/>
            <person name="Shah R."/>
            <person name="Rodriguez M."/>
            <person name="Hoon See L."/>
            <person name="Vil D."/>
            <person name="Baker J."/>
            <person name="Kirchoff K."/>
            <person name="Toth K."/>
            <person name="King L."/>
            <person name="Bahret A."/>
            <person name="Miller B."/>
            <person name="Marra M.A."/>
            <person name="Martienssen R."/>
            <person name="McCombie W.R."/>
            <person name="Wilson R.K."/>
            <person name="Murphy G."/>
            <person name="Bancroft I."/>
            <person name="Volckaert G."/>
            <person name="Wambutt R."/>
            <person name="Duesterhoeft A."/>
            <person name="Stiekema W."/>
            <person name="Pohl T."/>
            <person name="Entian K.-D."/>
            <person name="Terryn N."/>
            <person name="Hartley N."/>
            <person name="Bent E."/>
            <person name="Johnson S."/>
            <person name="Langham S.-A."/>
            <person name="McCullagh B."/>
            <person name="Robben J."/>
            <person name="Grymonprez B."/>
            <person name="Zimmermann W."/>
            <person name="Ramsperger U."/>
            <person name="Wedler H."/>
            <person name="Balke K."/>
            <person name="Wedler E."/>
            <person name="Peters S."/>
            <person name="van Staveren M."/>
            <person name="Dirkse W."/>
            <person name="Mooijman P."/>
            <person name="Klein Lankhorst R."/>
            <person name="Weitzenegger T."/>
            <person name="Bothe G."/>
            <person name="Rose M."/>
            <person name="Hauf J."/>
            <person name="Berneiser S."/>
            <person name="Hempel S."/>
            <person name="Feldpausch M."/>
            <person name="Lamberth S."/>
            <person name="Villarroel R."/>
            <person name="Gielen J."/>
            <person name="Ardiles W."/>
            <person name="Bents O."/>
            <person name="Lemcke K."/>
            <person name="Kolesov G."/>
            <person name="Mayer K.F.X."/>
            <person name="Rudd S."/>
            <person name="Schoof H."/>
            <person name="Schueller C."/>
            <person name="Zaccaria P."/>
            <person name="Mewes H.-W."/>
            <person name="Bevan M."/>
            <person name="Fransz P.F."/>
        </authorList>
    </citation>
    <scope>NUCLEOTIDE SEQUENCE [LARGE SCALE GENOMIC DNA]</scope>
    <source>
        <strain>cv. Columbia</strain>
    </source>
</reference>
<reference key="3">
    <citation type="journal article" date="2017" name="Plant J.">
        <title>Araport11: a complete reannotation of the Arabidopsis thaliana reference genome.</title>
        <authorList>
            <person name="Cheng C.Y."/>
            <person name="Krishnakumar V."/>
            <person name="Chan A.P."/>
            <person name="Thibaud-Nissen F."/>
            <person name="Schobel S."/>
            <person name="Town C.D."/>
        </authorList>
    </citation>
    <scope>GENOME REANNOTATION</scope>
    <source>
        <strain>cv. Columbia</strain>
    </source>
</reference>
<reference key="4">
    <citation type="journal article" date="2003" name="Science">
        <title>Empirical analysis of transcriptional activity in the Arabidopsis genome.</title>
        <authorList>
            <person name="Yamada K."/>
            <person name="Lim J."/>
            <person name="Dale J.M."/>
            <person name="Chen H."/>
            <person name="Shinn P."/>
            <person name="Palm C.J."/>
            <person name="Southwick A.M."/>
            <person name="Wu H.C."/>
            <person name="Kim C.J."/>
            <person name="Nguyen M."/>
            <person name="Pham P.K."/>
            <person name="Cheuk R.F."/>
            <person name="Karlin-Newmann G."/>
            <person name="Liu S.X."/>
            <person name="Lam B."/>
            <person name="Sakano H."/>
            <person name="Wu T."/>
            <person name="Yu G."/>
            <person name="Miranda M."/>
            <person name="Quach H.L."/>
            <person name="Tripp M."/>
            <person name="Chang C.H."/>
            <person name="Lee J.M."/>
            <person name="Toriumi M.J."/>
            <person name="Chan M.M."/>
            <person name="Tang C.C."/>
            <person name="Onodera C.S."/>
            <person name="Deng J.M."/>
            <person name="Akiyama K."/>
            <person name="Ansari Y."/>
            <person name="Arakawa T."/>
            <person name="Banh J."/>
            <person name="Banno F."/>
            <person name="Bowser L."/>
            <person name="Brooks S.Y."/>
            <person name="Carninci P."/>
            <person name="Chao Q."/>
            <person name="Choy N."/>
            <person name="Enju A."/>
            <person name="Goldsmith A.D."/>
            <person name="Gurjal M."/>
            <person name="Hansen N.F."/>
            <person name="Hayashizaki Y."/>
            <person name="Johnson-Hopson C."/>
            <person name="Hsuan V.W."/>
            <person name="Iida K."/>
            <person name="Karnes M."/>
            <person name="Khan S."/>
            <person name="Koesema E."/>
            <person name="Ishida J."/>
            <person name="Jiang P.X."/>
            <person name="Jones T."/>
            <person name="Kawai J."/>
            <person name="Kamiya A."/>
            <person name="Meyers C."/>
            <person name="Nakajima M."/>
            <person name="Narusaka M."/>
            <person name="Seki M."/>
            <person name="Sakurai T."/>
            <person name="Satou M."/>
            <person name="Tamse R."/>
            <person name="Vaysberg M."/>
            <person name="Wallender E.K."/>
            <person name="Wong C."/>
            <person name="Yamamura Y."/>
            <person name="Yuan S."/>
            <person name="Shinozaki K."/>
            <person name="Davis R.W."/>
            <person name="Theologis A."/>
            <person name="Ecker J.R."/>
        </authorList>
    </citation>
    <scope>NUCLEOTIDE SEQUENCE [LARGE SCALE MRNA]</scope>
    <source>
        <strain>cv. Columbia</strain>
    </source>
</reference>
<reference key="5">
    <citation type="journal article" date="1988" name="Plant Physiol.">
        <title>Characterization of an hsp70 cognate gene family in Arabidopsis.</title>
        <authorList>
            <person name="Wu C.H."/>
            <person name="Caspar T."/>
            <person name="Browse J."/>
            <person name="Lindquist S."/>
            <person name="Somerville C.R."/>
        </authorList>
    </citation>
    <scope>NUCLEOTIDE SEQUENCE [GENOMIC DNA] OF 1-120</scope>
    <scope>INDUCTION</scope>
</reference>
<reference key="6">
    <citation type="submission" date="1994-01" db="EMBL/GenBank/DDBJ databases">
        <authorList>
            <person name="King K."/>
        </authorList>
    </citation>
    <scope>NUCLEOTIDE SEQUENCE [GENOMIC DNA] OF 15-651</scope>
    <source>
        <strain>cv. Ostwestfalen</strain>
        <tissue>Leaf</tissue>
    </source>
</reference>
<reference key="7">
    <citation type="journal article" date="1994" name="Plant Mol. Biol.">
        <title>Cloning of cDNAs for genes that are early-responsive to dehydration stress (ERDs) in Arabidopsis thaliana L.: identification of three ERDs as HSP cognate genes.</title>
        <authorList>
            <person name="Kiyosue T."/>
            <person name="Yamaguchi-shinozaki K."/>
            <person name="Shinozaki K."/>
        </authorList>
    </citation>
    <scope>INDUCTION BY DEHYDRATION STRESS AND ABA</scope>
</reference>
<reference key="8">
    <citation type="online journal article" date="1999" name="Plant Gene Register">
        <title>The nucleotide sequence of a cDNA encoding the AtTIR, a TIR-like resistance protein in Arabidopsis thaliana.</title>
        <authorList>
            <person name="Kroczynska B."/>
            <person name="Ciesielski A."/>
            <person name="Stachnik K."/>
        </authorList>
        <locator>PGR99-172</locator>
    </citation>
    <scope>INTERACTION WITH TIR</scope>
    <source>
        <strain>cv. Columbia</strain>
    </source>
</reference>
<reference key="9">
    <citation type="journal article" date="2001" name="Cell Stress Chaperones">
        <title>Genomic analysis of the Hsp70 superfamily in Arabidopsis thaliana.</title>
        <authorList>
            <person name="Lin B.L."/>
            <person name="Wang J.S."/>
            <person name="Liu H.C."/>
            <person name="Chen R.W."/>
            <person name="Meyer Y."/>
            <person name="Barakat A."/>
            <person name="Delseny M."/>
        </authorList>
    </citation>
    <scope>GENE FAMILY</scope>
    <scope>NOMENCLATURE</scope>
</reference>
<reference key="10">
    <citation type="journal article" date="2001" name="Plant Physiol.">
        <title>Comprehensive expression profile analysis of the Arabidopsis Hsp70 gene family.</title>
        <authorList>
            <person name="Sung D.Y."/>
            <person name="Vierling E."/>
            <person name="Guy C.L."/>
        </authorList>
    </citation>
    <scope>DNAK GENE SUBFAMILY</scope>
    <scope>INDUCTION</scope>
    <scope>DEVELOPMENTAL STAGE</scope>
</reference>
<reference key="11">
    <citation type="journal article" date="2002" name="J. Exp. Bot.">
        <title>Interaction between Arabidopsis heat shock transcription factor 1 and 70 kDa heat shock proteins.</title>
        <authorList>
            <person name="Kim B.H."/>
            <person name="Schoeffl F."/>
        </authorList>
    </citation>
    <scope>INTERACTION WITH HSFA1A/HSF1</scope>
</reference>
<reference key="12">
    <citation type="journal article" date="2003" name="Plant Physiol.">
        <title>Physiological and molecular assessment of altered expression of Hsc70-1 in Arabidopsis. Evidence for pleiotropic consequences.</title>
        <authorList>
            <person name="Sung D.Y."/>
            <person name="Guy C.L."/>
        </authorList>
    </citation>
    <scope>FUNCTION</scope>
</reference>
<reference key="13">
    <citation type="journal article" date="2005" name="Plant Physiol.">
        <title>Virus induction of heat shock protein 70 reflects a general response to protein accumulation in the plant cytosol.</title>
        <authorList>
            <person name="Aparicio F."/>
            <person name="Thomas C.L."/>
            <person name="Lederer C."/>
            <person name="Niu Y."/>
            <person name="Wang D."/>
            <person name="Maule A.J."/>
        </authorList>
    </citation>
    <scope>INDUCTION</scope>
</reference>
<reference key="14">
    <citation type="journal article" date="2006" name="Cell Death Differ.">
        <title>AtBAG6, a novel calmodulin-binding protein, induces programmed cell death in yeast and plants.</title>
        <authorList>
            <person name="Kang C.H."/>
            <person name="Jung W.Y."/>
            <person name="Kang Y.H."/>
            <person name="Kim J.Y."/>
            <person name="Kim D.G."/>
            <person name="Jeong J.C."/>
            <person name="Baek D.W."/>
            <person name="Jin J.B."/>
            <person name="Lee J.Y."/>
            <person name="Kim M.O."/>
            <person name="Chung W.S."/>
            <person name="Mengiste T."/>
            <person name="Koiwa H."/>
            <person name="Kwak S.S."/>
            <person name="Bahk J.D."/>
            <person name="Lee S.Y."/>
            <person name="Nam J.S."/>
            <person name="Yun D.J."/>
            <person name="Cho M.J."/>
        </authorList>
    </citation>
    <scope>INTERACTION WITH BAG3 AND BAG5</scope>
</reference>
<reference key="15">
    <citation type="journal article" date="2006" name="J. Biol. Chem.">
        <title>Identification and functional characterization of the BAG protein family in Arabidopsis thaliana.</title>
        <authorList>
            <person name="Doukhanina E.V."/>
            <person name="Chen S."/>
            <person name="van der Zalm E."/>
            <person name="Godzik A."/>
            <person name="Reed J."/>
            <person name="Dickman M.B."/>
        </authorList>
    </citation>
    <scope>INTERACTION WITH BAG4</scope>
</reference>
<reference key="16">
    <citation type="journal article" date="2007" name="Mol. Cell. Proteomics">
        <title>Multidimensional protein identification technology (MudPIT) analysis of ubiquitinated proteins in plants.</title>
        <authorList>
            <person name="Maor R."/>
            <person name="Jones A."/>
            <person name="Nuehse T.S."/>
            <person name="Studholme D.J."/>
            <person name="Peck S.C."/>
            <person name="Shirasu K."/>
        </authorList>
    </citation>
    <scope>IDENTIFICATION BY MASS SPECTROMETRY [LARGE SCALE ANALYSIS]</scope>
    <source>
        <strain>cv. Landsberg erecta</strain>
    </source>
</reference>
<reference key="17">
    <citation type="journal article" date="2007" name="Plant Cell">
        <title>Interaction between SGT1 and cytosolic/nuclear HSC70 chaperones regulates Arabidopsis immune responses.</title>
        <authorList>
            <person name="Noel L.D."/>
            <person name="Cagna G."/>
            <person name="Stuttmann J."/>
            <person name="Wirthmueller L."/>
            <person name="Betsuyaku S."/>
            <person name="Witte C.P."/>
            <person name="Bhat R."/>
            <person name="Pochon N."/>
            <person name="Colby T."/>
            <person name="Parker J.E."/>
        </authorList>
    </citation>
    <scope>FUNCTION</scope>
    <scope>INTERACTION WITH SGT1B</scope>
    <scope>SUBCELLULAR LOCATION</scope>
</reference>
<reference key="18">
    <citation type="journal article" date="2009" name="Plant Physiol.">
        <title>WPP-domain proteins mimic the activity of the HSC70-1 chaperone in preventing mistargeting of RanGAP1-anchoring protein WIT1.</title>
        <authorList>
            <person name="Brkljacic J."/>
            <person name="Zhao Q."/>
            <person name="Meier I."/>
        </authorList>
    </citation>
    <scope>INTERACTION WITH WPP1; WPP2 AND WIT1</scope>
    <scope>FUNCTION</scope>
</reference>
<reference key="19">
    <citation type="journal article" date="2010" name="Plant Cell">
        <title>The deubiquitinating enzyme AMSH3 is required for intracellular trafficking and vacuole biogenesis in Arabidopsis thaliana.</title>
        <authorList>
            <person name="Isono E."/>
            <person name="Katsiarimpa A."/>
            <person name="Mueller I.K."/>
            <person name="Anzenberger F."/>
            <person name="Stierhof Y.-D."/>
            <person name="Geldner N."/>
            <person name="Chory J."/>
            <person name="Schwechheimer C."/>
        </authorList>
    </citation>
    <scope>INTERACTION WITH AMSH3</scope>
</reference>
<reference key="20">
    <citation type="journal article" date="2011" name="Biochem. J.">
        <title>OEP61 is a chaperone receptor at the plastid outer envelope.</title>
        <authorList>
            <person name="von Loeffelholz O."/>
            <person name="Kriechbaumer V."/>
            <person name="Ewan R.A."/>
            <person name="Jonczyk R."/>
            <person name="Lehmann S."/>
            <person name="Young J.C."/>
            <person name="Abell B.M."/>
        </authorList>
    </citation>
    <scope>INTERACTION WITH OEP61</scope>
</reference>
<reference key="21">
    <citation type="journal article" date="2011" name="Plant J.">
        <title>AtHsp70-15-deficient Arabidopsis plants are characterized by reduced growth, a constitutive cytosolic protein response and enhanced resistance to TuMV.</title>
        <authorList>
            <person name="Jungkunz I."/>
            <person name="Link K."/>
            <person name="Vogel F."/>
            <person name="Voll L.M."/>
            <person name="Sonnewald S."/>
            <person name="Sonnewald U."/>
        </authorList>
    </citation>
    <scope>SUBCELLULAR LOCATION</scope>
    <scope>DISRUPTION PHENOTYPE</scope>
</reference>
<reference key="22">
    <citation type="journal article" date="2011" name="Plant Physiol.">
        <title>The cytosolic/nuclear HSC70 and HSP90 molecular chaperones are important for stomatal closure and modulate abscisic acid-dependent physiological responses in Arabidopsis.</title>
        <authorList>
            <person name="Clement M."/>
            <person name="Leonhardt N."/>
            <person name="Droillard M.J."/>
            <person name="Reiter I."/>
            <person name="Montillet J.L."/>
            <person name="Genty B."/>
            <person name="Lauriere C."/>
            <person name="Nussaume L."/>
            <person name="Noel L.D."/>
        </authorList>
    </citation>
    <scope>FUNCTION</scope>
</reference>
<reference key="23">
    <citation type="journal article" date="2011" name="Plant Physiol.">
        <title>The Mediator complex in plants: structure, phylogeny, and expression profiling of representative genes in a dicot (Arabidopsis) and a monocot (rice) during reproduction and abiotic stress.</title>
        <authorList>
            <person name="Mathur S."/>
            <person name="Vyas S."/>
            <person name="Kapoor S."/>
            <person name="Tyagi A.K."/>
        </authorList>
    </citation>
    <scope>NOMENCLATURE</scope>
</reference>
<reference key="24">
    <citation type="journal article" date="2012" name="J. Proteome Res.">
        <title>Identification of phosphoproteins in Arabidopsis thaliana leaves using polyethylene glycol fractionation, immobilized metal-ion affinity chromatography, two-dimensional gel electrophoresis and mass spectrometry.</title>
        <authorList>
            <person name="Aryal U.K."/>
            <person name="Krochko J.E."/>
            <person name="Ross A.R."/>
        </authorList>
    </citation>
    <scope>IDENTIFICATION BY MASS SPECTROMETRY [LARGE SCALE ANALYSIS]</scope>
</reference>
<reference key="25">
    <citation type="journal article" date="2012" name="Mol. Cell. Proteomics">
        <title>Comparative large-scale characterisation of plant vs. mammal proteins reveals similar and idiosyncratic N-alpha acetylation features.</title>
        <authorList>
            <person name="Bienvenut W.V."/>
            <person name="Sumpton D."/>
            <person name="Martinez A."/>
            <person name="Lilla S."/>
            <person name="Espagne C."/>
            <person name="Meinnel T."/>
            <person name="Giglione C."/>
        </authorList>
    </citation>
    <scope>ACETYLATION [LARGE SCALE ANALYSIS] AT SER-2</scope>
    <scope>CLEAVAGE OF INITIATOR METHIONINE [LARGE SCALE ANALYSIS]</scope>
    <scope>IDENTIFICATION BY MASS SPECTROMETRY [LARGE SCALE ANALYSIS]</scope>
</reference>
<reference key="26">
    <citation type="journal article" date="2015" name="Plant Physiol.">
        <title>Opposing effects on two phases of defense responses from concerted actions of HEAT SHOCK COGNATE70 and BONZAI1 in Arabidopsis.</title>
        <authorList>
            <person name="Gou M."/>
            <person name="Zhang Z."/>
            <person name="Zhang N."/>
            <person name="Huang Q."/>
            <person name="Monaghan J."/>
            <person name="Yang H."/>
            <person name="Shi Z."/>
            <person name="Zipfel C."/>
            <person name="Hua J."/>
        </authorList>
    </citation>
    <scope>INTERACTION WITH BON1</scope>
    <scope>DISRUPTION PHENOTYPE</scope>
</reference>
<reference key="27">
    <citation type="journal article" date="2017" name="J. Plant Res.">
        <title>A subclass of HSP70s regulate development and abiotic stress responses in Arabidopsis thaliana.</title>
        <authorList>
            <person name="Leng L."/>
            <person name="Liang Q."/>
            <person name="Jiang J."/>
            <person name="Zhang C."/>
            <person name="Hao Y."/>
            <person name="Wang X."/>
            <person name="Su W."/>
        </authorList>
    </citation>
    <scope>SUBCELLULAR LOCATION</scope>
    <scope>TISSUE SPECIFICITY</scope>
    <scope>DISRUPTION PHENOTYPE</scope>
</reference>
<organism>
    <name type="scientific">Arabidopsis thaliana</name>
    <name type="common">Mouse-ear cress</name>
    <dbReference type="NCBI Taxonomy" id="3702"/>
    <lineage>
        <taxon>Eukaryota</taxon>
        <taxon>Viridiplantae</taxon>
        <taxon>Streptophyta</taxon>
        <taxon>Embryophyta</taxon>
        <taxon>Tracheophyta</taxon>
        <taxon>Spermatophyta</taxon>
        <taxon>Magnoliopsida</taxon>
        <taxon>eudicotyledons</taxon>
        <taxon>Gunneridae</taxon>
        <taxon>Pentapetalae</taxon>
        <taxon>rosids</taxon>
        <taxon>malvids</taxon>
        <taxon>Brassicales</taxon>
        <taxon>Brassicaceae</taxon>
        <taxon>Camelineae</taxon>
        <taxon>Arabidopsis</taxon>
    </lineage>
</organism>
<sequence length="651" mass="71358">MSGKGEGPAIGIDLGTTYSCVGVWQHDRVEIIANDQGNRTTPSYVAFTDSERLIGDAAKNQVAMNPVNTVFDAKRLIGRRFSDSSVQSDMKLWPFKIQAGPADKPMIYVEYKGEEKEFAAEEISSMVLIKMREIAEAYLGVTIKNAVVTVPAYFNDSQRQATKDAGVIAGLNVMRIINEPTAAAIAYGLDKKATSVGEKNVLIFDLGGGTFDVSLLTIEEGIFEVKATAGDTHLGGEDFDNRMVNHFVQEFKRKSKKDITGNPRALRRLRTSCERAKRTLSSTAQTTIEIDSLYEGIDFYSTITRARFEELNMDLFRKCMEPVEKCLRDAKMDKSTVHDVVLVGGSTRIPKVQQLLQDFFNGKELCKSINPDEAVAYGAAVQGAILSGEGNEKVQDLLLLDVTPLSLGLETAGGVMTTLIPRNTTIPTKKEQVFSTYSDNQPGVLIQVYEGERARTKDNNLLGKFELSGIPPAPRGVPQITVCFDIDANGILNVSAEDKTTGQKNKITITNDKGRLSKDEIEKMVQEAEKYKSEDEEHKKKVEAKNALENYAYNMRNTIQDEKIGEKLPAADKKKIEDSIEQAIQWLEGNQLAEADEFEDKMKELESICNPIIAKMYQGAGGEAGGPGASGMDDDAPPASGGAGPKIEEVD</sequence>
<protein>
    <recommendedName>
        <fullName evidence="20">Heat shock 70 kDa protein 1</fullName>
    </recommendedName>
    <alternativeName>
        <fullName evidence="19">Heat shock cognate 70 kDa protein 1</fullName>
    </alternativeName>
    <alternativeName>
        <fullName evidence="19">Heat shock cognate protein 70-1</fullName>
        <shortName evidence="19">AtHsc70-1</shortName>
    </alternativeName>
    <alternativeName>
        <fullName evidence="20">Heat shock protein 70-1</fullName>
        <shortName evidence="20">AtHsp70-1</shortName>
    </alternativeName>
    <alternativeName>
        <fullName evidence="22">Protein EARLY-RESPONSIVE TO DEHYDRATION 2</fullName>
    </alternativeName>
</protein>